<accession>Q8BUN5</accession>
<accession>O09064</accession>
<accession>O09144</accession>
<accession>O14510</accession>
<accession>O35273</accession>
<accession>Q8BX84</accession>
<accession>Q92940</accession>
<accession>Q93002</accession>
<accession>Q9GKR4</accession>
<organism>
    <name type="scientific">Mus musculus</name>
    <name type="common">Mouse</name>
    <dbReference type="NCBI Taxonomy" id="10090"/>
    <lineage>
        <taxon>Eukaryota</taxon>
        <taxon>Metazoa</taxon>
        <taxon>Chordata</taxon>
        <taxon>Craniata</taxon>
        <taxon>Vertebrata</taxon>
        <taxon>Euteleostomi</taxon>
        <taxon>Mammalia</taxon>
        <taxon>Eutheria</taxon>
        <taxon>Euarchontoglires</taxon>
        <taxon>Glires</taxon>
        <taxon>Rodentia</taxon>
        <taxon>Myomorpha</taxon>
        <taxon>Muroidea</taxon>
        <taxon>Muridae</taxon>
        <taxon>Murinae</taxon>
        <taxon>Mus</taxon>
        <taxon>Mus</taxon>
    </lineage>
</organism>
<sequence>MSSILPFTPPIVKRLLGWKKGEQNGQEEKWCEKAVKSLVKKLKKTGQLDELEKAITTQNVNTKCITIPRSLDGRLQVSHRKGLPHVIYCRLWRWPDLHSHHELRAMELCEFAFNMKKDEVCVNPYHYQRVETPVLPPVLVPRHTEIPAEFPPLDDYSHSIPENTNFPAGIEPQSNIPETPPPGYLSEDGETSDHQMNHSMDAGSPNLSPNPMSPAHNNLDLQPVTYCEPAFWCSISYYELNQRVGETFHASQPSMTVDGFTDPSNSERFCLGLLSNVNRNAAVELTRRHIGRGVRLYYIGGEVFAECLSDSAIFVQSPNCNQRYGWHPATVCKIPPGCNLKIFNNQEFAALLAQSVNQGFEAVYQLTRMCTIRMSFVKGWGAEYRRQTVTSTPCWIELHLNGPLQWLDKVLTQMGSPSIRCSSVS</sequence>
<protein>
    <recommendedName>
        <fullName>Mothers against decapentaplegic homolog 3</fullName>
        <shortName>MAD homolog 3</shortName>
        <shortName>Mad3</shortName>
        <shortName>Mothers against DPP homolog 3</shortName>
        <shortName>mMad3</shortName>
    </recommendedName>
    <alternativeName>
        <fullName>SMAD family member 3</fullName>
        <shortName>SMAD 3</shortName>
        <shortName>Smad3</shortName>
    </alternativeName>
</protein>
<dbReference type="EMBL" id="AB008192">
    <property type="protein sequence ID" value="BAA76956.1"/>
    <property type="molecule type" value="mRNA"/>
</dbReference>
<dbReference type="EMBL" id="AF016189">
    <property type="protein sequence ID" value="AAB81755.1"/>
    <property type="molecule type" value="mRNA"/>
</dbReference>
<dbReference type="EMBL" id="AK048626">
    <property type="protein sequence ID" value="BAC33398.1"/>
    <property type="molecule type" value="mRNA"/>
</dbReference>
<dbReference type="EMBL" id="AK083158">
    <property type="protein sequence ID" value="BAC38789.1"/>
    <property type="molecule type" value="mRNA"/>
</dbReference>
<dbReference type="EMBL" id="BC066850">
    <property type="protein sequence ID" value="AAH66850.1"/>
    <property type="molecule type" value="mRNA"/>
</dbReference>
<dbReference type="CCDS" id="CCDS23272.1"/>
<dbReference type="RefSeq" id="NP_058049.3">
    <property type="nucleotide sequence ID" value="NM_016769.4"/>
</dbReference>
<dbReference type="SMR" id="Q8BUN5"/>
<dbReference type="BioGRID" id="201276">
    <property type="interactions" value="71"/>
</dbReference>
<dbReference type="ComplexPortal" id="CPX-10">
    <property type="entry name" value="SMAD2-SMAD3-SMAD4 complex"/>
</dbReference>
<dbReference type="ComplexPortal" id="CPX-14">
    <property type="entry name" value="SMAD3 homotrimer"/>
</dbReference>
<dbReference type="ComplexPortal" id="CPX-3286">
    <property type="entry name" value="SMAD3-SMAD4 complex"/>
</dbReference>
<dbReference type="CORUM" id="Q8BUN5"/>
<dbReference type="DIP" id="DIP-29717N"/>
<dbReference type="FunCoup" id="Q8BUN5">
    <property type="interactions" value="2514"/>
</dbReference>
<dbReference type="IntAct" id="Q8BUN5">
    <property type="interactions" value="47"/>
</dbReference>
<dbReference type="MINT" id="Q8BUN5"/>
<dbReference type="STRING" id="10090.ENSMUSP00000034973"/>
<dbReference type="ChEMBL" id="CHEMBL4888441"/>
<dbReference type="iPTMnet" id="Q8BUN5"/>
<dbReference type="PhosphoSitePlus" id="Q8BUN5"/>
<dbReference type="SwissPalm" id="Q8BUN5"/>
<dbReference type="PaxDb" id="10090-ENSMUSP00000034973"/>
<dbReference type="PeptideAtlas" id="Q8BUN5"/>
<dbReference type="ProteomicsDB" id="257255"/>
<dbReference type="Pumba" id="Q8BUN5"/>
<dbReference type="Antibodypedia" id="26224">
    <property type="antibodies" value="2321 antibodies from 45 providers"/>
</dbReference>
<dbReference type="DNASU" id="17127"/>
<dbReference type="Ensembl" id="ENSMUST00000034973.10">
    <property type="protein sequence ID" value="ENSMUSP00000034973.4"/>
    <property type="gene ID" value="ENSMUSG00000032402.13"/>
</dbReference>
<dbReference type="GeneID" id="17127"/>
<dbReference type="KEGG" id="mmu:17127"/>
<dbReference type="UCSC" id="uc009qbi.1">
    <property type="organism name" value="mouse"/>
</dbReference>
<dbReference type="AGR" id="MGI:1201674"/>
<dbReference type="CTD" id="4088"/>
<dbReference type="MGI" id="MGI:1201674">
    <property type="gene designation" value="Smad3"/>
</dbReference>
<dbReference type="VEuPathDB" id="HostDB:ENSMUSG00000032402"/>
<dbReference type="eggNOG" id="KOG3701">
    <property type="taxonomic scope" value="Eukaryota"/>
</dbReference>
<dbReference type="GeneTree" id="ENSGT00940000153499"/>
<dbReference type="HOGENOM" id="CLU_026736_0_0_1"/>
<dbReference type="InParanoid" id="Q8BUN5"/>
<dbReference type="OMA" id="VENCRYS"/>
<dbReference type="OrthoDB" id="5794312at2759"/>
<dbReference type="PhylomeDB" id="Q8BUN5"/>
<dbReference type="TreeFam" id="TF314923"/>
<dbReference type="Reactome" id="R-MMU-1181150">
    <property type="pathway name" value="Signaling by NODAL"/>
</dbReference>
<dbReference type="Reactome" id="R-MMU-1502540">
    <property type="pathway name" value="Signaling by Activin"/>
</dbReference>
<dbReference type="Reactome" id="R-MMU-2173788">
    <property type="pathway name" value="Downregulation of TGF-beta receptor signaling"/>
</dbReference>
<dbReference type="Reactome" id="R-MMU-2173789">
    <property type="pathway name" value="TGF-beta receptor signaling activates SMADs"/>
</dbReference>
<dbReference type="Reactome" id="R-MMU-2173795">
    <property type="pathway name" value="Downregulation of SMAD2/3:SMAD4 transcriptional activity"/>
</dbReference>
<dbReference type="Reactome" id="R-MMU-2173796">
    <property type="pathway name" value="SMAD2/SMAD3:SMAD4 heterotrimer regulates transcription"/>
</dbReference>
<dbReference type="Reactome" id="R-MMU-5689880">
    <property type="pathway name" value="Ub-specific processing proteases"/>
</dbReference>
<dbReference type="Reactome" id="R-MMU-8941855">
    <property type="pathway name" value="RUNX3 regulates CDKN1A transcription"/>
</dbReference>
<dbReference type="Reactome" id="R-MMU-9617828">
    <property type="pathway name" value="FOXO-mediated transcription of cell cycle genes"/>
</dbReference>
<dbReference type="BioGRID-ORCS" id="17127">
    <property type="hits" value="3 hits in 82 CRISPR screens"/>
</dbReference>
<dbReference type="ChiTaRS" id="Smad3">
    <property type="organism name" value="mouse"/>
</dbReference>
<dbReference type="PRO" id="PR:Q8BUN5"/>
<dbReference type="Proteomes" id="UP000000589">
    <property type="component" value="Chromosome 9"/>
</dbReference>
<dbReference type="RNAct" id="Q8BUN5">
    <property type="molecule type" value="protein"/>
</dbReference>
<dbReference type="Bgee" id="ENSMUSG00000032402">
    <property type="expression patterns" value="Expressed in undifferentiated genital tubercle and 252 other cell types or tissues"/>
</dbReference>
<dbReference type="ExpressionAtlas" id="Q8BUN5">
    <property type="expression patterns" value="baseline and differential"/>
</dbReference>
<dbReference type="GO" id="GO:0000785">
    <property type="term" value="C:chromatin"/>
    <property type="evidence" value="ECO:0007669"/>
    <property type="project" value="Ensembl"/>
</dbReference>
<dbReference type="GO" id="GO:0036064">
    <property type="term" value="C:ciliary basal body"/>
    <property type="evidence" value="ECO:0007669"/>
    <property type="project" value="Ensembl"/>
</dbReference>
<dbReference type="GO" id="GO:0005737">
    <property type="term" value="C:cytoplasm"/>
    <property type="evidence" value="ECO:0000314"/>
    <property type="project" value="UniProtKB"/>
</dbReference>
<dbReference type="GO" id="GO:0005829">
    <property type="term" value="C:cytosol"/>
    <property type="evidence" value="ECO:0000304"/>
    <property type="project" value="Reactome"/>
</dbReference>
<dbReference type="GO" id="GO:0071144">
    <property type="term" value="C:heteromeric SMAD protein complex"/>
    <property type="evidence" value="ECO:0000303"/>
    <property type="project" value="ComplexPortal"/>
</dbReference>
<dbReference type="GO" id="GO:0005637">
    <property type="term" value="C:nuclear inner membrane"/>
    <property type="evidence" value="ECO:0007669"/>
    <property type="project" value="Ensembl"/>
</dbReference>
<dbReference type="GO" id="GO:0005654">
    <property type="term" value="C:nucleoplasm"/>
    <property type="evidence" value="ECO:0000304"/>
    <property type="project" value="Reactome"/>
</dbReference>
<dbReference type="GO" id="GO:0005634">
    <property type="term" value="C:nucleus"/>
    <property type="evidence" value="ECO:0000314"/>
    <property type="project" value="UniProtKB"/>
</dbReference>
<dbReference type="GO" id="GO:0005886">
    <property type="term" value="C:plasma membrane"/>
    <property type="evidence" value="ECO:0000314"/>
    <property type="project" value="MGI"/>
</dbReference>
<dbReference type="GO" id="GO:0043235">
    <property type="term" value="C:receptor complex"/>
    <property type="evidence" value="ECO:0007669"/>
    <property type="project" value="Ensembl"/>
</dbReference>
<dbReference type="GO" id="GO:0071141">
    <property type="term" value="C:SMAD protein complex"/>
    <property type="evidence" value="ECO:0000250"/>
    <property type="project" value="UniProtKB"/>
</dbReference>
<dbReference type="GO" id="GO:0005667">
    <property type="term" value="C:transcription regulator complex"/>
    <property type="evidence" value="ECO:0000250"/>
    <property type="project" value="UniProtKB"/>
</dbReference>
<dbReference type="GO" id="GO:0008013">
    <property type="term" value="F:beta-catenin binding"/>
    <property type="evidence" value="ECO:0007669"/>
    <property type="project" value="Ensembl"/>
</dbReference>
<dbReference type="GO" id="GO:0043425">
    <property type="term" value="F:bHLH transcription factor binding"/>
    <property type="evidence" value="ECO:0007669"/>
    <property type="project" value="Ensembl"/>
</dbReference>
<dbReference type="GO" id="GO:0003682">
    <property type="term" value="F:chromatin binding"/>
    <property type="evidence" value="ECO:0000314"/>
    <property type="project" value="MGI"/>
</dbReference>
<dbReference type="GO" id="GO:0031490">
    <property type="term" value="F:chromatin DNA binding"/>
    <property type="evidence" value="ECO:0000314"/>
    <property type="project" value="BHF-UCL"/>
</dbReference>
<dbReference type="GO" id="GO:0000987">
    <property type="term" value="F:cis-regulatory region sequence-specific DNA binding"/>
    <property type="evidence" value="ECO:0000250"/>
    <property type="project" value="UniProtKB"/>
</dbReference>
<dbReference type="GO" id="GO:0070410">
    <property type="term" value="F:co-SMAD binding"/>
    <property type="evidence" value="ECO:0007669"/>
    <property type="project" value="Ensembl"/>
</dbReference>
<dbReference type="GO" id="GO:0005518">
    <property type="term" value="F:collagen binding"/>
    <property type="evidence" value="ECO:0000353"/>
    <property type="project" value="MGI"/>
</dbReference>
<dbReference type="GO" id="GO:0017151">
    <property type="term" value="F:DEAD/H-box RNA helicase binding"/>
    <property type="evidence" value="ECO:0007669"/>
    <property type="project" value="Ensembl"/>
</dbReference>
<dbReference type="GO" id="GO:0003677">
    <property type="term" value="F:DNA binding"/>
    <property type="evidence" value="ECO:0000314"/>
    <property type="project" value="UniProtKB"/>
</dbReference>
<dbReference type="GO" id="GO:0001228">
    <property type="term" value="F:DNA-binding transcription activator activity, RNA polymerase II-specific"/>
    <property type="evidence" value="ECO:0000353"/>
    <property type="project" value="ARUK-UCL"/>
</dbReference>
<dbReference type="GO" id="GO:0003700">
    <property type="term" value="F:DNA-binding transcription factor activity"/>
    <property type="evidence" value="ECO:0000314"/>
    <property type="project" value="MGI"/>
</dbReference>
<dbReference type="GO" id="GO:0001217">
    <property type="term" value="F:DNA-binding transcription repressor activity"/>
    <property type="evidence" value="ECO:0007669"/>
    <property type="project" value="Ensembl"/>
</dbReference>
<dbReference type="GO" id="GO:0003690">
    <property type="term" value="F:double-stranded DNA binding"/>
    <property type="evidence" value="ECO:0000314"/>
    <property type="project" value="MGI"/>
</dbReference>
<dbReference type="GO" id="GO:0042802">
    <property type="term" value="F:identical protein binding"/>
    <property type="evidence" value="ECO:0000353"/>
    <property type="project" value="MGI"/>
</dbReference>
<dbReference type="GO" id="GO:0035259">
    <property type="term" value="F:nuclear glucocorticoid receptor binding"/>
    <property type="evidence" value="ECO:0007669"/>
    <property type="project" value="Ensembl"/>
</dbReference>
<dbReference type="GO" id="GO:0031962">
    <property type="term" value="F:nuclear mineralocorticoid receptor binding"/>
    <property type="evidence" value="ECO:0007669"/>
    <property type="project" value="Ensembl"/>
</dbReference>
<dbReference type="GO" id="GO:0019902">
    <property type="term" value="F:phosphatase binding"/>
    <property type="evidence" value="ECO:0007669"/>
    <property type="project" value="Ensembl"/>
</dbReference>
<dbReference type="GO" id="GO:1990841">
    <property type="term" value="F:promoter-specific chromatin binding"/>
    <property type="evidence" value="ECO:0000314"/>
    <property type="project" value="MGI"/>
</dbReference>
<dbReference type="GO" id="GO:0042803">
    <property type="term" value="F:protein homodimerization activity"/>
    <property type="evidence" value="ECO:0007669"/>
    <property type="project" value="Ensembl"/>
</dbReference>
<dbReference type="GO" id="GO:0019901">
    <property type="term" value="F:protein kinase binding"/>
    <property type="evidence" value="ECO:0007669"/>
    <property type="project" value="Ensembl"/>
</dbReference>
<dbReference type="GO" id="GO:0070412">
    <property type="term" value="F:R-SMAD binding"/>
    <property type="evidence" value="ECO:0007669"/>
    <property type="project" value="Ensembl"/>
</dbReference>
<dbReference type="GO" id="GO:0000977">
    <property type="term" value="F:RNA polymerase II transcription regulatory region sequence-specific DNA binding"/>
    <property type="evidence" value="ECO:0000314"/>
    <property type="project" value="UniProtKB"/>
</dbReference>
<dbReference type="GO" id="GO:0061629">
    <property type="term" value="F:RNA polymerase II-specific DNA-binding transcription factor binding"/>
    <property type="evidence" value="ECO:0000353"/>
    <property type="project" value="UniProtKB"/>
</dbReference>
<dbReference type="GO" id="GO:0032810">
    <property type="term" value="F:sterol response element binding"/>
    <property type="evidence" value="ECO:0007669"/>
    <property type="project" value="Ensembl"/>
</dbReference>
<dbReference type="GO" id="GO:0001223">
    <property type="term" value="F:transcription coactivator binding"/>
    <property type="evidence" value="ECO:0007669"/>
    <property type="project" value="Ensembl"/>
</dbReference>
<dbReference type="GO" id="GO:0001222">
    <property type="term" value="F:transcription corepressor binding"/>
    <property type="evidence" value="ECO:0007669"/>
    <property type="project" value="Ensembl"/>
</dbReference>
<dbReference type="GO" id="GO:0005160">
    <property type="term" value="F:transforming growth factor beta receptor binding"/>
    <property type="evidence" value="ECO:0007669"/>
    <property type="project" value="Ensembl"/>
</dbReference>
<dbReference type="GO" id="GO:0043130">
    <property type="term" value="F:ubiquitin binding"/>
    <property type="evidence" value="ECO:0007669"/>
    <property type="project" value="Ensembl"/>
</dbReference>
<dbReference type="GO" id="GO:0031625">
    <property type="term" value="F:ubiquitin protein ligase binding"/>
    <property type="evidence" value="ECO:0007669"/>
    <property type="project" value="Ensembl"/>
</dbReference>
<dbReference type="GO" id="GO:0008270">
    <property type="term" value="F:zinc ion binding"/>
    <property type="evidence" value="ECO:0007669"/>
    <property type="project" value="Ensembl"/>
</dbReference>
<dbReference type="GO" id="GO:0032924">
    <property type="term" value="P:activin receptor signaling pathway"/>
    <property type="evidence" value="ECO:0000303"/>
    <property type="project" value="ComplexPortal"/>
</dbReference>
<dbReference type="GO" id="GO:0030325">
    <property type="term" value="P:adrenal gland development"/>
    <property type="evidence" value="ECO:0007669"/>
    <property type="project" value="Ensembl"/>
</dbReference>
<dbReference type="GO" id="GO:0006915">
    <property type="term" value="P:apoptotic process"/>
    <property type="evidence" value="ECO:0000315"/>
    <property type="project" value="MGI"/>
</dbReference>
<dbReference type="GO" id="GO:0008283">
    <property type="term" value="P:cell population proliferation"/>
    <property type="evidence" value="ECO:0000316"/>
    <property type="project" value="MGI"/>
</dbReference>
<dbReference type="GO" id="GO:0045216">
    <property type="term" value="P:cell-cell junction organization"/>
    <property type="evidence" value="ECO:0007669"/>
    <property type="project" value="Ensembl"/>
</dbReference>
<dbReference type="GO" id="GO:0071333">
    <property type="term" value="P:cellular response to glucose stimulus"/>
    <property type="evidence" value="ECO:0007669"/>
    <property type="project" value="Ensembl"/>
</dbReference>
<dbReference type="GO" id="GO:0098586">
    <property type="term" value="P:cellular response to virus"/>
    <property type="evidence" value="ECO:0000314"/>
    <property type="project" value="MGI"/>
</dbReference>
<dbReference type="GO" id="GO:0048589">
    <property type="term" value="P:developmental growth"/>
    <property type="evidence" value="ECO:0000316"/>
    <property type="project" value="MGI"/>
</dbReference>
<dbReference type="GO" id="GO:0048701">
    <property type="term" value="P:embryonic cranial skeleton morphogenesis"/>
    <property type="evidence" value="ECO:0000316"/>
    <property type="project" value="MGI"/>
</dbReference>
<dbReference type="GO" id="GO:0048617">
    <property type="term" value="P:embryonic foregut morphogenesis"/>
    <property type="evidence" value="ECO:0000316"/>
    <property type="project" value="MGI"/>
</dbReference>
<dbReference type="GO" id="GO:0009880">
    <property type="term" value="P:embryonic pattern specification"/>
    <property type="evidence" value="ECO:0000316"/>
    <property type="project" value="MGI"/>
</dbReference>
<dbReference type="GO" id="GO:0007492">
    <property type="term" value="P:endoderm development"/>
    <property type="evidence" value="ECO:0000316"/>
    <property type="project" value="MGI"/>
</dbReference>
<dbReference type="GO" id="GO:0097191">
    <property type="term" value="P:extrinsic apoptotic signaling pathway"/>
    <property type="evidence" value="ECO:0007669"/>
    <property type="project" value="Ensembl"/>
</dbReference>
<dbReference type="GO" id="GO:0007369">
    <property type="term" value="P:gastrulation"/>
    <property type="evidence" value="ECO:0000316"/>
    <property type="project" value="MGI"/>
</dbReference>
<dbReference type="GO" id="GO:0001947">
    <property type="term" value="P:heart looping"/>
    <property type="evidence" value="ECO:0000316"/>
    <property type="project" value="MGI"/>
</dbReference>
<dbReference type="GO" id="GO:0006955">
    <property type="term" value="P:immune response"/>
    <property type="evidence" value="ECO:0007669"/>
    <property type="project" value="Ensembl"/>
</dbReference>
<dbReference type="GO" id="GO:0002520">
    <property type="term" value="P:immune system development"/>
    <property type="evidence" value="ECO:0000316"/>
    <property type="project" value="MGI"/>
</dbReference>
<dbReference type="GO" id="GO:0001701">
    <property type="term" value="P:in utero embryonic development"/>
    <property type="evidence" value="ECO:0000316"/>
    <property type="project" value="MGI"/>
</dbReference>
<dbReference type="GO" id="GO:0007254">
    <property type="term" value="P:JNK cascade"/>
    <property type="evidence" value="ECO:0000315"/>
    <property type="project" value="MGI"/>
</dbReference>
<dbReference type="GO" id="GO:0070306">
    <property type="term" value="P:lens fiber cell differentiation"/>
    <property type="evidence" value="ECO:0000315"/>
    <property type="project" value="MGI"/>
</dbReference>
<dbReference type="GO" id="GO:0001889">
    <property type="term" value="P:liver development"/>
    <property type="evidence" value="ECO:0000316"/>
    <property type="project" value="MGI"/>
</dbReference>
<dbReference type="GO" id="GO:0000165">
    <property type="term" value="P:MAPK cascade"/>
    <property type="evidence" value="ECO:0000315"/>
    <property type="project" value="MGI"/>
</dbReference>
<dbReference type="GO" id="GO:0001707">
    <property type="term" value="P:mesoderm formation"/>
    <property type="evidence" value="ECO:0000315"/>
    <property type="project" value="MGI"/>
</dbReference>
<dbReference type="GO" id="GO:0043066">
    <property type="term" value="P:negative regulation of apoptotic process"/>
    <property type="evidence" value="ECO:0007669"/>
    <property type="project" value="Ensembl"/>
</dbReference>
<dbReference type="GO" id="GO:1903243">
    <property type="term" value="P:negative regulation of cardiac muscle hypertrophy in response to stress"/>
    <property type="evidence" value="ECO:0007669"/>
    <property type="project" value="Ensembl"/>
</dbReference>
<dbReference type="GO" id="GO:0030308">
    <property type="term" value="P:negative regulation of cell growth"/>
    <property type="evidence" value="ECO:0007669"/>
    <property type="project" value="Ensembl"/>
</dbReference>
<dbReference type="GO" id="GO:0051481">
    <property type="term" value="P:negative regulation of cytosolic calcium ion concentration"/>
    <property type="evidence" value="ECO:0007669"/>
    <property type="project" value="Ensembl"/>
</dbReference>
<dbReference type="GO" id="GO:0045599">
    <property type="term" value="P:negative regulation of fat cell differentiation"/>
    <property type="evidence" value="ECO:0007669"/>
    <property type="project" value="Ensembl"/>
</dbReference>
<dbReference type="GO" id="GO:0010629">
    <property type="term" value="P:negative regulation of gene expression"/>
    <property type="evidence" value="ECO:0007669"/>
    <property type="project" value="Ensembl"/>
</dbReference>
<dbReference type="GO" id="GO:0050728">
    <property type="term" value="P:negative regulation of inflammatory response"/>
    <property type="evidence" value="ECO:0000315"/>
    <property type="project" value="UniProtKB"/>
</dbReference>
<dbReference type="GO" id="GO:0061767">
    <property type="term" value="P:negative regulation of lung blood pressure"/>
    <property type="evidence" value="ECO:0007669"/>
    <property type="project" value="Ensembl"/>
</dbReference>
<dbReference type="GO" id="GO:1902894">
    <property type="term" value="P:negative regulation of miRNA transcription"/>
    <property type="evidence" value="ECO:0007669"/>
    <property type="project" value="Ensembl"/>
</dbReference>
<dbReference type="GO" id="GO:0030279">
    <property type="term" value="P:negative regulation of ossification"/>
    <property type="evidence" value="ECO:0007669"/>
    <property type="project" value="Ensembl"/>
</dbReference>
<dbReference type="GO" id="GO:0045668">
    <property type="term" value="P:negative regulation of osteoblast differentiation"/>
    <property type="evidence" value="ECO:0000316"/>
    <property type="project" value="MGI"/>
</dbReference>
<dbReference type="GO" id="GO:0033689">
    <property type="term" value="P:negative regulation of osteoblast proliferation"/>
    <property type="evidence" value="ECO:0000315"/>
    <property type="project" value="UniProtKB"/>
</dbReference>
<dbReference type="GO" id="GO:0042177">
    <property type="term" value="P:negative regulation of protein catabolic process"/>
    <property type="evidence" value="ECO:0007669"/>
    <property type="project" value="Ensembl"/>
</dbReference>
<dbReference type="GO" id="GO:0000122">
    <property type="term" value="P:negative regulation of transcription by RNA polymerase II"/>
    <property type="evidence" value="ECO:0000314"/>
    <property type="project" value="MGI"/>
</dbReference>
<dbReference type="GO" id="GO:0061045">
    <property type="term" value="P:negative regulation of wound healing"/>
    <property type="evidence" value="ECO:0000315"/>
    <property type="project" value="UniProtKB"/>
</dbReference>
<dbReference type="GO" id="GO:0038092">
    <property type="term" value="P:nodal signaling pathway"/>
    <property type="evidence" value="ECO:0007669"/>
    <property type="project" value="Ensembl"/>
</dbReference>
<dbReference type="GO" id="GO:0002076">
    <property type="term" value="P:osteoblast development"/>
    <property type="evidence" value="ECO:0000316"/>
    <property type="project" value="MGI"/>
</dbReference>
<dbReference type="GO" id="GO:0001649">
    <property type="term" value="P:osteoblast differentiation"/>
    <property type="evidence" value="ECO:0000315"/>
    <property type="project" value="UniProtKB"/>
</dbReference>
<dbReference type="GO" id="GO:0048340">
    <property type="term" value="P:paraxial mesoderm morphogenesis"/>
    <property type="evidence" value="ECO:0000315"/>
    <property type="project" value="MGI"/>
</dbReference>
<dbReference type="GO" id="GO:0060039">
    <property type="term" value="P:pericardium development"/>
    <property type="evidence" value="ECO:0000316"/>
    <property type="project" value="MGI"/>
</dbReference>
<dbReference type="GO" id="GO:0030501">
    <property type="term" value="P:positive regulation of bone mineralization"/>
    <property type="evidence" value="ECO:0007669"/>
    <property type="project" value="Ensembl"/>
</dbReference>
<dbReference type="GO" id="GO:0090263">
    <property type="term" value="P:positive regulation of canonical Wnt signaling pathway"/>
    <property type="evidence" value="ECO:0007669"/>
    <property type="project" value="Ensembl"/>
</dbReference>
<dbReference type="GO" id="GO:0030335">
    <property type="term" value="P:positive regulation of cell migration"/>
    <property type="evidence" value="ECO:0007669"/>
    <property type="project" value="Ensembl"/>
</dbReference>
<dbReference type="GO" id="GO:0032332">
    <property type="term" value="P:positive regulation of chondrocyte differentiation"/>
    <property type="evidence" value="ECO:0000315"/>
    <property type="project" value="UniProtKB"/>
</dbReference>
<dbReference type="GO" id="GO:0045893">
    <property type="term" value="P:positive regulation of DNA-templated transcription"/>
    <property type="evidence" value="ECO:0000314"/>
    <property type="project" value="MGI"/>
</dbReference>
<dbReference type="GO" id="GO:0010718">
    <property type="term" value="P:positive regulation of epithelial to mesenchymal transition"/>
    <property type="evidence" value="ECO:0007669"/>
    <property type="project" value="Ensembl"/>
</dbReference>
<dbReference type="GO" id="GO:1901203">
    <property type="term" value="P:positive regulation of extracellular matrix assembly"/>
    <property type="evidence" value="ECO:0007669"/>
    <property type="project" value="Ensembl"/>
</dbReference>
<dbReference type="GO" id="GO:0051894">
    <property type="term" value="P:positive regulation of focal adhesion assembly"/>
    <property type="evidence" value="ECO:0007669"/>
    <property type="project" value="Ensembl"/>
</dbReference>
<dbReference type="GO" id="GO:0032731">
    <property type="term" value="P:positive regulation of interleukin-1 beta production"/>
    <property type="evidence" value="ECO:0007669"/>
    <property type="project" value="Ensembl"/>
</dbReference>
<dbReference type="GO" id="GO:1902895">
    <property type="term" value="P:positive regulation of miRNA transcription"/>
    <property type="evidence" value="ECO:0007669"/>
    <property type="project" value="Ensembl"/>
</dbReference>
<dbReference type="GO" id="GO:0045429">
    <property type="term" value="P:positive regulation of nitric oxide biosynthetic process"/>
    <property type="evidence" value="ECO:0007669"/>
    <property type="project" value="Ensembl"/>
</dbReference>
<dbReference type="GO" id="GO:0050927">
    <property type="term" value="P:positive regulation of positive chemotaxis"/>
    <property type="evidence" value="ECO:0007669"/>
    <property type="project" value="Ensembl"/>
</dbReference>
<dbReference type="GO" id="GO:0060391">
    <property type="term" value="P:positive regulation of SMAD protein signal transduction"/>
    <property type="evidence" value="ECO:0007669"/>
    <property type="project" value="Ensembl"/>
</dbReference>
<dbReference type="GO" id="GO:0051496">
    <property type="term" value="P:positive regulation of stress fiber assembly"/>
    <property type="evidence" value="ECO:0007669"/>
    <property type="project" value="Ensembl"/>
</dbReference>
<dbReference type="GO" id="GO:0045944">
    <property type="term" value="P:positive regulation of transcription by RNA polymerase II"/>
    <property type="evidence" value="ECO:0000314"/>
    <property type="project" value="UniProtKB"/>
</dbReference>
<dbReference type="GO" id="GO:0032916">
    <property type="term" value="P:positive regulation of transforming growth factor beta3 production"/>
    <property type="evidence" value="ECO:0007669"/>
    <property type="project" value="Ensembl"/>
</dbReference>
<dbReference type="GO" id="GO:0050821">
    <property type="term" value="P:protein stabilization"/>
    <property type="evidence" value="ECO:0007669"/>
    <property type="project" value="Ensembl"/>
</dbReference>
<dbReference type="GO" id="GO:0006355">
    <property type="term" value="P:regulation of DNA-templated transcription"/>
    <property type="evidence" value="ECO:0000303"/>
    <property type="project" value="ComplexPortal"/>
</dbReference>
<dbReference type="GO" id="GO:0050678">
    <property type="term" value="P:regulation of epithelial cell proliferation"/>
    <property type="evidence" value="ECO:0000315"/>
    <property type="project" value="MGI"/>
</dbReference>
<dbReference type="GO" id="GO:0050776">
    <property type="term" value="P:regulation of immune response"/>
    <property type="evidence" value="ECO:0000315"/>
    <property type="project" value="UniProtKB"/>
</dbReference>
<dbReference type="GO" id="GO:0051881">
    <property type="term" value="P:regulation of mitochondrial membrane potential"/>
    <property type="evidence" value="ECO:0007669"/>
    <property type="project" value="Ensembl"/>
</dbReference>
<dbReference type="GO" id="GO:0016202">
    <property type="term" value="P:regulation of striated muscle tissue development"/>
    <property type="evidence" value="ECO:0000314"/>
    <property type="project" value="MGI"/>
</dbReference>
<dbReference type="GO" id="GO:0017015">
    <property type="term" value="P:regulation of transforming growth factor beta receptor signaling pathway"/>
    <property type="evidence" value="ECO:0000314"/>
    <property type="project" value="MGI"/>
</dbReference>
<dbReference type="GO" id="GO:0032909">
    <property type="term" value="P:regulation of transforming growth factor beta2 production"/>
    <property type="evidence" value="ECO:0007669"/>
    <property type="project" value="Ensembl"/>
</dbReference>
<dbReference type="GO" id="GO:0001836">
    <property type="term" value="P:release of cytochrome c from mitochondria"/>
    <property type="evidence" value="ECO:0007669"/>
    <property type="project" value="Ensembl"/>
</dbReference>
<dbReference type="GO" id="GO:1990776">
    <property type="term" value="P:response to angiotensin"/>
    <property type="evidence" value="ECO:0007669"/>
    <property type="project" value="Ensembl"/>
</dbReference>
<dbReference type="GO" id="GO:0001666">
    <property type="term" value="P:response to hypoxia"/>
    <property type="evidence" value="ECO:0007669"/>
    <property type="project" value="Ensembl"/>
</dbReference>
<dbReference type="GO" id="GO:0071559">
    <property type="term" value="P:response to transforming growth factor beta"/>
    <property type="evidence" value="ECO:0000316"/>
    <property type="project" value="MGI"/>
</dbReference>
<dbReference type="GO" id="GO:0023019">
    <property type="term" value="P:signal transduction involved in regulation of gene expression"/>
    <property type="evidence" value="ECO:0007669"/>
    <property type="project" value="Ensembl"/>
</dbReference>
<dbReference type="GO" id="GO:0001501">
    <property type="term" value="P:skeletal system development"/>
    <property type="evidence" value="ECO:0000316"/>
    <property type="project" value="MGI"/>
</dbReference>
<dbReference type="GO" id="GO:0060395">
    <property type="term" value="P:SMAD protein signal transduction"/>
    <property type="evidence" value="ECO:0000316"/>
    <property type="project" value="MGI"/>
</dbReference>
<dbReference type="GO" id="GO:0001756">
    <property type="term" value="P:somitogenesis"/>
    <property type="evidence" value="ECO:0000315"/>
    <property type="project" value="MGI"/>
</dbReference>
<dbReference type="GO" id="GO:0042110">
    <property type="term" value="P:T cell activation"/>
    <property type="evidence" value="ECO:0000315"/>
    <property type="project" value="UniProtKB"/>
</dbReference>
<dbReference type="GO" id="GO:0030878">
    <property type="term" value="P:thyroid gland development"/>
    <property type="evidence" value="ECO:0000316"/>
    <property type="project" value="MGI"/>
</dbReference>
<dbReference type="GO" id="GO:0060290">
    <property type="term" value="P:transdifferentiation"/>
    <property type="evidence" value="ECO:0007669"/>
    <property type="project" value="Ensembl"/>
</dbReference>
<dbReference type="GO" id="GO:0007179">
    <property type="term" value="P:transforming growth factor beta receptor signaling pathway"/>
    <property type="evidence" value="ECO:0000314"/>
    <property type="project" value="MGI"/>
</dbReference>
<dbReference type="GO" id="GO:0061450">
    <property type="term" value="P:trophoblast cell migration"/>
    <property type="evidence" value="ECO:0007669"/>
    <property type="project" value="Ensembl"/>
</dbReference>
<dbReference type="GO" id="GO:0001657">
    <property type="term" value="P:ureteric bud development"/>
    <property type="evidence" value="ECO:0000270"/>
    <property type="project" value="UniProtKB"/>
</dbReference>
<dbReference type="CDD" id="cd10491">
    <property type="entry name" value="MH1_SMAD_2_3"/>
    <property type="match status" value="1"/>
</dbReference>
<dbReference type="CDD" id="cd10985">
    <property type="entry name" value="MH2_SMAD_2_3"/>
    <property type="match status" value="1"/>
</dbReference>
<dbReference type="FunFam" id="2.60.200.10:FF:000001">
    <property type="entry name" value="Mothers against decapentaplegic homolog"/>
    <property type="match status" value="1"/>
</dbReference>
<dbReference type="FunFam" id="3.90.520.10:FF:000001">
    <property type="entry name" value="Mothers against decapentaplegic homolog"/>
    <property type="match status" value="1"/>
</dbReference>
<dbReference type="Gene3D" id="2.60.200.10">
    <property type="match status" value="1"/>
</dbReference>
<dbReference type="Gene3D" id="3.90.520.10">
    <property type="entry name" value="SMAD MH1 domain"/>
    <property type="match status" value="1"/>
</dbReference>
<dbReference type="InterPro" id="IPR013790">
    <property type="entry name" value="Dwarfin"/>
</dbReference>
<dbReference type="InterPro" id="IPR003619">
    <property type="entry name" value="MAD_homology1_Dwarfin-type"/>
</dbReference>
<dbReference type="InterPro" id="IPR013019">
    <property type="entry name" value="MAD_homology_MH1"/>
</dbReference>
<dbReference type="InterPro" id="IPR017855">
    <property type="entry name" value="SMAD-like_dom_sf"/>
</dbReference>
<dbReference type="InterPro" id="IPR001132">
    <property type="entry name" value="SMAD_dom_Dwarfin-type"/>
</dbReference>
<dbReference type="InterPro" id="IPR008984">
    <property type="entry name" value="SMAD_FHA_dom_sf"/>
</dbReference>
<dbReference type="InterPro" id="IPR036578">
    <property type="entry name" value="SMAD_MH1_sf"/>
</dbReference>
<dbReference type="PANTHER" id="PTHR13703:SF53">
    <property type="entry name" value="MOTHERS AGAINST DECAPENTAPLEGIC HOMOLOG 3"/>
    <property type="match status" value="1"/>
</dbReference>
<dbReference type="PANTHER" id="PTHR13703">
    <property type="entry name" value="SMAD"/>
    <property type="match status" value="1"/>
</dbReference>
<dbReference type="Pfam" id="PF03165">
    <property type="entry name" value="MH1"/>
    <property type="match status" value="1"/>
</dbReference>
<dbReference type="Pfam" id="PF03166">
    <property type="entry name" value="MH2"/>
    <property type="match status" value="1"/>
</dbReference>
<dbReference type="SMART" id="SM00523">
    <property type="entry name" value="DWA"/>
    <property type="match status" value="1"/>
</dbReference>
<dbReference type="SMART" id="SM00524">
    <property type="entry name" value="DWB"/>
    <property type="match status" value="1"/>
</dbReference>
<dbReference type="SUPFAM" id="SSF56366">
    <property type="entry name" value="SMAD MH1 domain"/>
    <property type="match status" value="1"/>
</dbReference>
<dbReference type="SUPFAM" id="SSF49879">
    <property type="entry name" value="SMAD/FHA domain"/>
    <property type="match status" value="1"/>
</dbReference>
<dbReference type="PROSITE" id="PS51075">
    <property type="entry name" value="MH1"/>
    <property type="match status" value="1"/>
</dbReference>
<dbReference type="PROSITE" id="PS51076">
    <property type="entry name" value="MH2"/>
    <property type="match status" value="1"/>
</dbReference>
<reference key="1">
    <citation type="journal article" date="1999" name="J. Vet. Med. Sci.">
        <title>Cloning and studies of the mouse cDNA encoding Smad3.</title>
        <authorList>
            <person name="Kano K."/>
            <person name="Notani A."/>
            <person name="Nam S.-Y."/>
            <person name="Fujisawa M."/>
            <person name="Kurohmaru M."/>
            <person name="Hayashi Y."/>
        </authorList>
    </citation>
    <scope>NUCLEOTIDE SEQUENCE [MRNA]</scope>
    <scope>TISSUE SPECIFICITY</scope>
    <source>
        <tissue>Brain</tissue>
    </source>
</reference>
<reference key="2">
    <citation type="submission" date="1997-07" db="EMBL/GenBank/DDBJ databases">
        <authorList>
            <person name="Yang X."/>
            <person name="Xu X."/>
            <person name="Shen S."/>
            <person name="Deng C."/>
        </authorList>
    </citation>
    <scope>NUCLEOTIDE SEQUENCE [MRNA]</scope>
    <source>
        <strain>C57BL/6J</strain>
    </source>
</reference>
<reference key="3">
    <citation type="journal article" date="2005" name="Science">
        <title>The transcriptional landscape of the mammalian genome.</title>
        <authorList>
            <person name="Carninci P."/>
            <person name="Kasukawa T."/>
            <person name="Katayama S."/>
            <person name="Gough J."/>
            <person name="Frith M.C."/>
            <person name="Maeda N."/>
            <person name="Oyama R."/>
            <person name="Ravasi T."/>
            <person name="Lenhard B."/>
            <person name="Wells C."/>
            <person name="Kodzius R."/>
            <person name="Shimokawa K."/>
            <person name="Bajic V.B."/>
            <person name="Brenner S.E."/>
            <person name="Batalov S."/>
            <person name="Forrest A.R."/>
            <person name="Zavolan M."/>
            <person name="Davis M.J."/>
            <person name="Wilming L.G."/>
            <person name="Aidinis V."/>
            <person name="Allen J.E."/>
            <person name="Ambesi-Impiombato A."/>
            <person name="Apweiler R."/>
            <person name="Aturaliya R.N."/>
            <person name="Bailey T.L."/>
            <person name="Bansal M."/>
            <person name="Baxter L."/>
            <person name="Beisel K.W."/>
            <person name="Bersano T."/>
            <person name="Bono H."/>
            <person name="Chalk A.M."/>
            <person name="Chiu K.P."/>
            <person name="Choudhary V."/>
            <person name="Christoffels A."/>
            <person name="Clutterbuck D.R."/>
            <person name="Crowe M.L."/>
            <person name="Dalla E."/>
            <person name="Dalrymple B.P."/>
            <person name="de Bono B."/>
            <person name="Della Gatta G."/>
            <person name="di Bernardo D."/>
            <person name="Down T."/>
            <person name="Engstrom P."/>
            <person name="Fagiolini M."/>
            <person name="Faulkner G."/>
            <person name="Fletcher C.F."/>
            <person name="Fukushima T."/>
            <person name="Furuno M."/>
            <person name="Futaki S."/>
            <person name="Gariboldi M."/>
            <person name="Georgii-Hemming P."/>
            <person name="Gingeras T.R."/>
            <person name="Gojobori T."/>
            <person name="Green R.E."/>
            <person name="Gustincich S."/>
            <person name="Harbers M."/>
            <person name="Hayashi Y."/>
            <person name="Hensch T.K."/>
            <person name="Hirokawa N."/>
            <person name="Hill D."/>
            <person name="Huminiecki L."/>
            <person name="Iacono M."/>
            <person name="Ikeo K."/>
            <person name="Iwama A."/>
            <person name="Ishikawa T."/>
            <person name="Jakt M."/>
            <person name="Kanapin A."/>
            <person name="Katoh M."/>
            <person name="Kawasawa Y."/>
            <person name="Kelso J."/>
            <person name="Kitamura H."/>
            <person name="Kitano H."/>
            <person name="Kollias G."/>
            <person name="Krishnan S.P."/>
            <person name="Kruger A."/>
            <person name="Kummerfeld S.K."/>
            <person name="Kurochkin I.V."/>
            <person name="Lareau L.F."/>
            <person name="Lazarevic D."/>
            <person name="Lipovich L."/>
            <person name="Liu J."/>
            <person name="Liuni S."/>
            <person name="McWilliam S."/>
            <person name="Madan Babu M."/>
            <person name="Madera M."/>
            <person name="Marchionni L."/>
            <person name="Matsuda H."/>
            <person name="Matsuzawa S."/>
            <person name="Miki H."/>
            <person name="Mignone F."/>
            <person name="Miyake S."/>
            <person name="Morris K."/>
            <person name="Mottagui-Tabar S."/>
            <person name="Mulder N."/>
            <person name="Nakano N."/>
            <person name="Nakauchi H."/>
            <person name="Ng P."/>
            <person name="Nilsson R."/>
            <person name="Nishiguchi S."/>
            <person name="Nishikawa S."/>
            <person name="Nori F."/>
            <person name="Ohara O."/>
            <person name="Okazaki Y."/>
            <person name="Orlando V."/>
            <person name="Pang K.C."/>
            <person name="Pavan W.J."/>
            <person name="Pavesi G."/>
            <person name="Pesole G."/>
            <person name="Petrovsky N."/>
            <person name="Piazza S."/>
            <person name="Reed J."/>
            <person name="Reid J.F."/>
            <person name="Ring B.Z."/>
            <person name="Ringwald M."/>
            <person name="Rost B."/>
            <person name="Ruan Y."/>
            <person name="Salzberg S.L."/>
            <person name="Sandelin A."/>
            <person name="Schneider C."/>
            <person name="Schoenbach C."/>
            <person name="Sekiguchi K."/>
            <person name="Semple C.A."/>
            <person name="Seno S."/>
            <person name="Sessa L."/>
            <person name="Sheng Y."/>
            <person name="Shibata Y."/>
            <person name="Shimada H."/>
            <person name="Shimada K."/>
            <person name="Silva D."/>
            <person name="Sinclair B."/>
            <person name="Sperling S."/>
            <person name="Stupka E."/>
            <person name="Sugiura K."/>
            <person name="Sultana R."/>
            <person name="Takenaka Y."/>
            <person name="Taki K."/>
            <person name="Tammoja K."/>
            <person name="Tan S.L."/>
            <person name="Tang S."/>
            <person name="Taylor M.S."/>
            <person name="Tegner J."/>
            <person name="Teichmann S.A."/>
            <person name="Ueda H.R."/>
            <person name="van Nimwegen E."/>
            <person name="Verardo R."/>
            <person name="Wei C.L."/>
            <person name="Yagi K."/>
            <person name="Yamanishi H."/>
            <person name="Zabarovsky E."/>
            <person name="Zhu S."/>
            <person name="Zimmer A."/>
            <person name="Hide W."/>
            <person name="Bult C."/>
            <person name="Grimmond S.M."/>
            <person name="Teasdale R.D."/>
            <person name="Liu E.T."/>
            <person name="Brusic V."/>
            <person name="Quackenbush J."/>
            <person name="Wahlestedt C."/>
            <person name="Mattick J.S."/>
            <person name="Hume D.A."/>
            <person name="Kai C."/>
            <person name="Sasaki D."/>
            <person name="Tomaru Y."/>
            <person name="Fukuda S."/>
            <person name="Kanamori-Katayama M."/>
            <person name="Suzuki M."/>
            <person name="Aoki J."/>
            <person name="Arakawa T."/>
            <person name="Iida J."/>
            <person name="Imamura K."/>
            <person name="Itoh M."/>
            <person name="Kato T."/>
            <person name="Kawaji H."/>
            <person name="Kawagashira N."/>
            <person name="Kawashima T."/>
            <person name="Kojima M."/>
            <person name="Kondo S."/>
            <person name="Konno H."/>
            <person name="Nakano K."/>
            <person name="Ninomiya N."/>
            <person name="Nishio T."/>
            <person name="Okada M."/>
            <person name="Plessy C."/>
            <person name="Shibata K."/>
            <person name="Shiraki T."/>
            <person name="Suzuki S."/>
            <person name="Tagami M."/>
            <person name="Waki K."/>
            <person name="Watahiki A."/>
            <person name="Okamura-Oho Y."/>
            <person name="Suzuki H."/>
            <person name="Kawai J."/>
            <person name="Hayashizaki Y."/>
        </authorList>
    </citation>
    <scope>NUCLEOTIDE SEQUENCE [LARGE SCALE MRNA]</scope>
    <source>
        <strain>C57BL/6J</strain>
        <tissue>Head</tissue>
        <tissue>Hippocampus</tissue>
    </source>
</reference>
<reference key="4">
    <citation type="journal article" date="2004" name="Genome Res.">
        <title>The status, quality, and expansion of the NIH full-length cDNA project: the Mammalian Gene Collection (MGC).</title>
        <authorList>
            <consortium name="The MGC Project Team"/>
        </authorList>
    </citation>
    <scope>NUCLEOTIDE SEQUENCE [LARGE SCALE MRNA]</scope>
    <source>
        <strain>C57BL/6J</strain>
        <tissue>Embryo</tissue>
    </source>
</reference>
<reference key="5">
    <citation type="journal article" date="1997" name="Proc. Natl. Acad. Sci. U.S.A.">
        <title>Transforming growth factor beta-induced phosphorylation of Smad3 is required for growth inhibition and transcriptional induction in epithelial cells.</title>
        <authorList>
            <person name="Liu X."/>
            <person name="Sun Y."/>
            <person name="Constantinescu S.N."/>
            <person name="Karam E."/>
            <person name="Weinberg R.A."/>
            <person name="Lodish H.F."/>
        </authorList>
    </citation>
    <scope>PHOSPHORYLATION AT SER-422; SER-423 AND SER-425</scope>
</reference>
<reference key="6">
    <citation type="journal article" date="1999" name="Nat. Cell Biol.">
        <title>Mice lacking Smad3 show accelerated wound healing and an impaired local inflammatory response.</title>
        <authorList>
            <person name="Ashcroft G.S."/>
            <person name="Yang X."/>
            <person name="Glick A.B."/>
            <person name="Weinstein M."/>
            <person name="Letterio J.L."/>
            <person name="Mizel D.E."/>
            <person name="Anzano M."/>
            <person name="Greenwell-Wild T."/>
            <person name="Wahl S.M."/>
            <person name="Deng C."/>
            <person name="Roberts A.B."/>
        </authorList>
    </citation>
    <scope>DISRUPTION PHENOTYPE</scope>
    <scope>FUNCTION</scope>
</reference>
<reference key="7">
    <citation type="journal article" date="2000" name="J. Biol. Chem.">
        <title>Identification and characterization of a PDZ protein that interacts with activin types II receptors.</title>
        <authorList>
            <person name="Shoji H."/>
            <person name="Tsuchida K."/>
            <person name="Kishi H."/>
            <person name="Yamakawa N."/>
            <person name="Matsuzaki T."/>
            <person name="Liu Z."/>
            <person name="Nakamura T."/>
            <person name="Sugino H."/>
        </authorList>
    </citation>
    <scope>INTERACTION WITH MAGI2</scope>
    <scope>IDENTIFICATION IN A COMPLEX WITH MAGI2; ACVR2A AND ACVR1B</scope>
</reference>
<reference key="8">
    <citation type="journal article" date="2000" name="Mol. Cell. Biol.">
        <title>Hgs (Hrs), a FYVE domain protein, is involved in Smad signaling through cooperation with SARA.</title>
        <authorList>
            <person name="Miura S."/>
            <person name="Takeshita T."/>
            <person name="Asao H."/>
            <person name="Kimura Y."/>
            <person name="Murata K."/>
            <person name="Sasaki Y."/>
            <person name="Hanai J."/>
            <person name="Beppu H."/>
            <person name="Tsukazaki T."/>
            <person name="Wrana J.L."/>
            <person name="Miyazono K."/>
            <person name="Sugamura K."/>
        </authorList>
    </citation>
    <scope>INTERACTION WITH HGS</scope>
</reference>
<reference key="9">
    <citation type="journal article" date="2001" name="J. Bone Miner. Res.">
        <title>The loss of Smad3 results in a lower rate of bone formation and osteopenia through dysregulation of osteoblast differentiation and apoptosis.</title>
        <authorList>
            <person name="Borton A.J."/>
            <person name="Frederick J.P."/>
            <person name="Datto M.B."/>
            <person name="Wang X.F."/>
            <person name="Weinstein R.S."/>
        </authorList>
    </citation>
    <scope>DISRUPTION PHENOTYPE</scope>
    <scope>FUNCTION</scope>
</reference>
<reference key="10">
    <citation type="journal article" date="2002" name="Mol. Cell. Biol.">
        <title>Identification of mZnf8, a mouse Kruppel-like transcriptional repressor, as a novel nuclear interaction partner of Smad1.</title>
        <authorList>
            <person name="Jiao K."/>
            <person name="Zhou Y."/>
            <person name="Hogan B.L.M."/>
        </authorList>
    </citation>
    <scope>INTERACTION WITH ZNF8</scope>
</reference>
<reference key="11">
    <citation type="journal article" date="2003" name="Wound Repair Regen.">
        <title>Role of Smad3 in the hormonal modulation of in vivo wound healing responses.</title>
        <authorList>
            <person name="Ashcroft G.S."/>
            <person name="Mills S.J."/>
            <person name="Flanders K.C."/>
            <person name="Lyakh L.A."/>
            <person name="Anzano M.A."/>
            <person name="Gilliver S.C."/>
            <person name="Roberts A.B."/>
        </authorList>
    </citation>
    <scope>DISRUPTION PHENOTYPE</scope>
    <scope>FUNCTION</scope>
</reference>
<reference key="12">
    <citation type="journal article" date="2004" name="J. Cell. Biochem.">
        <title>A LIM protein, Hic-5, functions as a potential coactivator for Sp1.</title>
        <authorList>
            <person name="Shibanuma M."/>
            <person name="Kim-Kaneyama J.-R."/>
            <person name="Sato S."/>
            <person name="Nose K."/>
        </authorList>
    </citation>
    <scope>INTERACTION WITH TGFB1I1</scope>
</reference>
<reference key="13">
    <citation type="journal article" date="2004" name="Nature">
        <title>Cytoplasmic PML function in TGF-beta signalling.</title>
        <authorList>
            <person name="Lin H.K."/>
            <person name="Bergmann S."/>
            <person name="Pandolfi P.P."/>
        </authorList>
    </citation>
    <scope>FUNCTION</scope>
    <scope>SUBCELLULAR LOCATION</scope>
    <scope>PHOSPHORYLATION</scope>
    <scope>INTERACTION WITH PML AND ZFYVE9/SARA</scope>
</reference>
<reference key="14">
    <citation type="journal article" date="2004" name="Oncogene">
        <title>Negative regulation of transforming growth factor-beta (TGF-beta) signaling by WW domain-containing protein 1 (WWP1).</title>
        <authorList>
            <person name="Komuro A."/>
            <person name="Imamura T."/>
            <person name="Saitoh M."/>
            <person name="Yoshida Y."/>
            <person name="Yamori T."/>
            <person name="Miyazono K."/>
            <person name="Miyazawa K."/>
        </authorList>
    </citation>
    <scope>INTERACTION WITH WWP1</scope>
</reference>
<reference key="15">
    <citation type="journal article" date="2005" name="Biochem. J.">
        <title>NEDD4-2 (neural precursor cell expressed, developmentally down-regulated 4-2) negatively regulates TGF-beta (transforming growth factor-beta) signalling by inducing ubiquitin-mediated degradation of Smad2 and TGF-beta type I receptor.</title>
        <authorList>
            <person name="Kuratomi G."/>
            <person name="Komuro A."/>
            <person name="Goto K."/>
            <person name="Shinozaki M."/>
            <person name="Miyazawa K."/>
            <person name="Miyazono K."/>
            <person name="Imamura T."/>
        </authorList>
    </citation>
    <scope>INTERACTION WITH NEDD4L</scope>
</reference>
<reference key="16">
    <citation type="journal article" date="2005" name="Genes Cells">
        <title>Smicl is a novel Smad interacting protein and cleavage and polyadenylation specificity factor associated protein.</title>
        <authorList>
            <person name="Collart C."/>
            <person name="Remacle J.E."/>
            <person name="Barabino S."/>
            <person name="van Grunsven L.A."/>
            <person name="Nelles L."/>
            <person name="Schellens A."/>
            <person name="Van de Putte T."/>
            <person name="Pype S."/>
            <person name="Huylebroeck D."/>
            <person name="Verschueren K."/>
        </authorList>
    </citation>
    <scope>INTERACTION WITH ZC3H3</scope>
</reference>
<reference key="17">
    <citation type="journal article" date="2007" name="Biochim. Biophys. Acta">
        <title>PRDM16/MEL1: a novel Smad binding protein expressed in murine embryonic orofacial tissue.</title>
        <authorList>
            <person name="Warner D.R."/>
            <person name="Horn K.H."/>
            <person name="Mudd L."/>
            <person name="Webb C.L."/>
            <person name="Greene R.M."/>
            <person name="Pisano M.M."/>
        </authorList>
    </citation>
    <scope>INTERACTION WITH PRDM16</scope>
</reference>
<reference key="18">
    <citation type="journal article" date="2007" name="Development">
        <title>Ttrap is an essential modulator of Smad3-dependent Nodal signaling during zebrafish gastrulation and left-right axis determination.</title>
        <authorList>
            <person name="Esguerra C.V."/>
            <person name="Nelles L."/>
            <person name="Vermeire L."/>
            <person name="Ibrahimi A."/>
            <person name="Crawford A.D."/>
            <person name="Derua R."/>
            <person name="Janssens E."/>
            <person name="Waelkens E."/>
            <person name="Carmeliet P."/>
            <person name="Collen D."/>
            <person name="Huylebroeck D."/>
        </authorList>
    </citation>
    <scope>INTERACTION WITH TTRAP</scope>
</reference>
<reference key="19">
    <citation type="journal article" date="2009" name="J. Biol. Chem.">
        <title>FoxL2 and Smad3 coordinately regulate follistatin gene transcription.</title>
        <authorList>
            <person name="Blount A.L."/>
            <person name="Schmidt K."/>
            <person name="Justice N.J."/>
            <person name="Vale W.W."/>
            <person name="Fischer W.H."/>
            <person name="Bilezikjian L.M."/>
        </authorList>
    </citation>
    <scope>INTERACTION WITH FOXL2</scope>
</reference>
<reference key="20">
    <citation type="journal article" date="2010" name="Dev. Cell">
        <title>The Crumbs complex couples cell density sensing to Hippo-dependent control of the TGF-beta-SMAD pathway.</title>
        <authorList>
            <person name="Varelas X."/>
            <person name="Samavarchi-Tehrani P."/>
            <person name="Narimatsu M."/>
            <person name="Weiss A."/>
            <person name="Cockburn K."/>
            <person name="Larsen B.G."/>
            <person name="Rossant J."/>
            <person name="Wrana J.L."/>
        </authorList>
    </citation>
    <scope>INTERACTION WITH YAP1 AND SMAD4</scope>
    <scope>SUBCELLULAR LOCATION</scope>
</reference>
<reference key="21">
    <citation type="journal article" date="2011" name="Exp. Mol. Pathol.">
        <title>Loss of Smad3 gives rise to poor soft callus formation and accelerates early fracture healing.</title>
        <authorList>
            <person name="Kawakatsu M."/>
            <person name="Kanno S."/>
            <person name="Gui T."/>
            <person name="Gai Z."/>
            <person name="Itoh S."/>
            <person name="Tanishima H."/>
            <person name="Oikawa K."/>
            <person name="Muragaki Y."/>
        </authorList>
    </citation>
    <scope>DISRUPTION PHENOTYPE</scope>
    <scope>FUNCTION</scope>
</reference>
<reference key="22">
    <citation type="journal article" date="2012" name="Cell. Signal.">
        <title>Protein phosphatase 5 modulates SMAD3 function in the transforming growth factor-beta pathway.</title>
        <authorList>
            <person name="Bruce D.L."/>
            <person name="Macartney T."/>
            <person name="Yong W."/>
            <person name="Shou W."/>
            <person name="Sapkota G.P."/>
        </authorList>
    </citation>
    <scope>INTERACTION WITH PPP5C</scope>
    <scope>SUBCELLULAR LOCATION</scope>
</reference>
<reference key="23">
    <citation type="journal article" date="2007" name="PLoS Biol.">
        <title>Arkadia enhances Nodal/TGF-beta signaling by coupling phospho-Smad2/3 activity and turnover.</title>
        <authorList>
            <person name="Mavrakis K.J."/>
            <person name="Andrew R.L."/>
            <person name="Lee K.L."/>
            <person name="Petropoulou C."/>
            <person name="Dixon J.E."/>
            <person name="Navaratnam N."/>
            <person name="Norris D.P."/>
            <person name="Episkopou V."/>
        </authorList>
    </citation>
    <scope>INTERACTION WITH RNF111</scope>
    <scope>UBIQUITINATION</scope>
</reference>
<evidence type="ECO:0000250" key="1"/>
<evidence type="ECO:0000250" key="2">
    <source>
        <dbReference type="UniProtKB" id="P84022"/>
    </source>
</evidence>
<evidence type="ECO:0000250" key="3">
    <source>
        <dbReference type="UniProtKB" id="P84025"/>
    </source>
</evidence>
<evidence type="ECO:0000255" key="4">
    <source>
        <dbReference type="PROSITE-ProRule" id="PRU00438"/>
    </source>
</evidence>
<evidence type="ECO:0000255" key="5">
    <source>
        <dbReference type="PROSITE-ProRule" id="PRU00439"/>
    </source>
</evidence>
<evidence type="ECO:0000256" key="6">
    <source>
        <dbReference type="SAM" id="MobiDB-lite"/>
    </source>
</evidence>
<evidence type="ECO:0000269" key="7">
    <source>
    </source>
</evidence>
<evidence type="ECO:0000269" key="8">
    <source>
    </source>
</evidence>
<evidence type="ECO:0000269" key="9">
    <source>
    </source>
</evidence>
<evidence type="ECO:0000269" key="10">
    <source>
    </source>
</evidence>
<evidence type="ECO:0000269" key="11">
    <source>
    </source>
</evidence>
<evidence type="ECO:0000269" key="12">
    <source>
    </source>
</evidence>
<evidence type="ECO:0000269" key="13">
    <source>
    </source>
</evidence>
<evidence type="ECO:0000269" key="14">
    <source>
    </source>
</evidence>
<evidence type="ECO:0000269" key="15">
    <source>
    </source>
</evidence>
<evidence type="ECO:0000269" key="16">
    <source>
    </source>
</evidence>
<evidence type="ECO:0000269" key="17">
    <source>
    </source>
</evidence>
<evidence type="ECO:0000269" key="18">
    <source>
    </source>
</evidence>
<evidence type="ECO:0000269" key="19">
    <source>
    </source>
</evidence>
<evidence type="ECO:0000269" key="20">
    <source>
    </source>
</evidence>
<evidence type="ECO:0000269" key="21">
    <source>
    </source>
</evidence>
<evidence type="ECO:0000269" key="22">
    <source>
    </source>
</evidence>
<evidence type="ECO:0000269" key="23">
    <source>
    </source>
</evidence>
<evidence type="ECO:0000269" key="24">
    <source>
    </source>
</evidence>
<evidence type="ECO:0000269" key="25">
    <source>
    </source>
</evidence>
<evidence type="ECO:0000269" key="26">
    <source>
    </source>
</evidence>
<evidence type="ECO:0000305" key="27"/>
<feature type="initiator methionine" description="Removed" evidence="2">
    <location>
        <position position="1"/>
    </location>
</feature>
<feature type="chain" id="PRO_0000090857" description="Mothers against decapentaplegic homolog 3">
    <location>
        <begin position="2"/>
        <end position="425"/>
    </location>
</feature>
<feature type="domain" description="MH1" evidence="4">
    <location>
        <begin position="10"/>
        <end position="136"/>
    </location>
</feature>
<feature type="domain" description="MH2" evidence="5">
    <location>
        <begin position="232"/>
        <end position="425"/>
    </location>
</feature>
<feature type="region of interest" description="Linker">
    <location>
        <begin position="137"/>
        <end position="231"/>
    </location>
</feature>
<feature type="region of interest" description="Disordered" evidence="6">
    <location>
        <begin position="165"/>
        <end position="208"/>
    </location>
</feature>
<feature type="region of interest" description="Sufficient for interaction with XPO4" evidence="1">
    <location>
        <begin position="271"/>
        <end position="324"/>
    </location>
</feature>
<feature type="compositionally biased region" description="Polar residues" evidence="6">
    <location>
        <begin position="165"/>
        <end position="177"/>
    </location>
</feature>
<feature type="binding site" evidence="1">
    <location>
        <position position="64"/>
    </location>
    <ligand>
        <name>Zn(2+)</name>
        <dbReference type="ChEBI" id="CHEBI:29105"/>
    </ligand>
</feature>
<feature type="binding site" evidence="1">
    <location>
        <position position="109"/>
    </location>
    <ligand>
        <name>Zn(2+)</name>
        <dbReference type="ChEBI" id="CHEBI:29105"/>
    </ligand>
</feature>
<feature type="binding site" evidence="1">
    <location>
        <position position="121"/>
    </location>
    <ligand>
        <name>Zn(2+)</name>
        <dbReference type="ChEBI" id="CHEBI:29105"/>
    </ligand>
</feature>
<feature type="binding site" evidence="1">
    <location>
        <position position="126"/>
    </location>
    <ligand>
        <name>Zn(2+)</name>
        <dbReference type="ChEBI" id="CHEBI:29105"/>
    </ligand>
</feature>
<feature type="site" description="Required for trimerization" evidence="1">
    <location>
        <position position="40"/>
    </location>
</feature>
<feature type="site" description="Required for interaction with DNA and JUN and for functional cooperation with JUN" evidence="1">
    <location>
        <position position="41"/>
    </location>
</feature>
<feature type="modified residue" description="N-acetylserine" evidence="2">
    <location>
        <position position="2"/>
    </location>
</feature>
<feature type="modified residue" description="Phosphothreonine; by CDK2 and CDK4" evidence="2">
    <location>
        <position position="8"/>
    </location>
</feature>
<feature type="modified residue" description="Phosphothreonine; by CDK2, CDK4 and MAPK" evidence="2">
    <location>
        <position position="179"/>
    </location>
</feature>
<feature type="modified residue" description="Phosphoserine; by GSK3 and MAPK" evidence="2 5">
    <location>
        <position position="204"/>
    </location>
</feature>
<feature type="modified residue" description="Phosphoserine; by MAPK" evidence="2 5">
    <location>
        <position position="208"/>
    </location>
</feature>
<feature type="modified residue" description="Phosphoserine; by CDK2 and CDK4" evidence="2 5">
    <location>
        <position position="213"/>
    </location>
</feature>
<feature type="modified residue" description="N6-acetyllysine" evidence="2">
    <location>
        <position position="378"/>
    </location>
</feature>
<feature type="modified residue" description="Phosphoserine" evidence="2 5">
    <location>
        <position position="416"/>
    </location>
</feature>
<feature type="modified residue" description="Phosphoserine; by CK1" evidence="2 5">
    <location>
        <position position="418"/>
    </location>
</feature>
<feature type="modified residue" description="Phosphoserine; by TGFBR1" evidence="5 26">
    <location>
        <position position="422"/>
    </location>
</feature>
<feature type="modified residue" description="Phosphoserine; by TGFBR1" evidence="5 26">
    <location>
        <position position="423"/>
    </location>
</feature>
<feature type="modified residue" description="Phosphoserine; by TGFBR1" evidence="5 26">
    <location>
        <position position="425"/>
    </location>
</feature>
<feature type="cross-link" description="Glycyl lysine isopeptide (Lys-Gly) (interchain with G-Cter in ubiquitin)" evidence="2">
    <location>
        <position position="33"/>
    </location>
</feature>
<feature type="cross-link" description="Glycyl lysine isopeptide (Lys-Gly) (interchain with G-Cter in ubiquitin)" evidence="2">
    <location>
        <position position="81"/>
    </location>
</feature>
<feature type="sequence conflict" description="In Ref. 3; BAC38789." evidence="27" ref="3">
    <original>Q</original>
    <variation>E</variation>
    <location>
        <position position="26"/>
    </location>
</feature>
<feature type="sequence conflict" description="In Ref. 2; AAB81755." evidence="27" ref="2">
    <original>F</original>
    <variation>L</variation>
    <location>
        <position position="269"/>
    </location>
</feature>
<feature type="sequence conflict" description="In Ref. 3; BAC33398." evidence="27" ref="3">
    <original>D</original>
    <variation>V</variation>
    <location>
        <position position="408"/>
    </location>
</feature>
<name>SMAD3_MOUSE</name>
<keyword id="KW-0007">Acetylation</keyword>
<keyword id="KW-0013">ADP-ribosylation</keyword>
<keyword id="KW-0963">Cytoplasm</keyword>
<keyword id="KW-1017">Isopeptide bond</keyword>
<keyword id="KW-0479">Metal-binding</keyword>
<keyword id="KW-0539">Nucleus</keyword>
<keyword id="KW-0597">Phosphoprotein</keyword>
<keyword id="KW-1185">Reference proteome</keyword>
<keyword id="KW-0804">Transcription</keyword>
<keyword id="KW-0805">Transcription regulation</keyword>
<keyword id="KW-0832">Ubl conjugation</keyword>
<keyword id="KW-0862">Zinc</keyword>
<comment type="function">
    <text evidence="2 8 11 13 16 23">Receptor-regulated SMAD (R-SMAD) that is an intracellular signal transducer and transcriptional modulator activated by TGF-beta (transforming growth factor) and activin type 1 receptor kinases. Binds the TRE element in the promoter region of many genes that are regulated by TGF-beta and, on formation of the SMAD3/SMAD4 complex, activates transcription. Also can form a SMAD3/SMAD4/JUN/FOS complex at the AP-1/SMAD site to regulate TGF-beta-mediated transcription. Has an inhibitory effect on wound healing probably by modulating both growth and migration of primary keratinocytes and by altering the TGF-mediated chemotaxis of monocytes. This effect on wound healing appears to be hormone-sensitive. Regulator of chondrogenesis and osteogenesis and inhibits early healing of bone fractures. Positively regulates PDPK1 kinase activity by stimulating its dissociation from the 14-3-3 protein YWHAQ which acts as a negative regulator (By similarity).</text>
</comment>
<comment type="subunit">
    <text evidence="2 3 9 10 12 14 15 16 17 18 19 20 21 22 24 25">Monomer; in the absence of TGF-beta (By similarity). Homooligomer; in the presence of TGF-beta (By similarity). Heterotrimer; forms a heterotrimer in the presence of TGF-beta consisting of two molecules of C-terminally phosphorylated SMAD2 or SMAD3 and one of SMAD4 to form the transcriptionally active SMAD2/SMAD3-SMAD4 complex (PubMed:21145499). Part of a complex consisting of MAGI2/ARIP1, ACVR2A, ACVR1B and SMAD3 (PubMed:15496141). Forms a complex with SMAD2 and TRIM33 upon addition of TGF-beta (By similarity). Found in a complex composed of SMAD3, RAN and XPO4; within the complex interacts directly with XPO4 (By similarity). Component of the multimeric complex SMAD3/SMAD4/JUN/FOS which forms at the AP1 promoter site; required for synergistic transcriptional activity in response to TGF-beta (By similarity). Part of a ternary complex composed of SMAD3, ITCH/AIP4 and NEDD9/HEF1; within the complex NEDD9/HEF1 interacts (via N-terminus) with ITCH/AIP4; the complex mediates ubiquitination and proteasomal degradation of NEDD9/HEF1 (By similarity). Interacts with NEDD9; the interaction promotes NEDD9 ubiquitination and proteasomal degradation (By similarity). Interacts (via an N-terminal domain) with JUN (via its basic DNA binding and leucine zipper domains); this interaction is essential for DNA binding and cooperative transcriptional activity in response to TGF-beta (By similarity). Identified in a complex that contains at least ZNF451, SMAD2, SMAD3 and SMAD4 (By similarity). Interacts with PPM1A; the interaction dephosphorylates SMAD3 in the C-terminal SXS motif leading to disruption of the SMAD2/3-SMAD4 complex, nuclear export and termination of TGF-beta signaling (By similarity). Interacts (via MH2 domain) with ZMIZ1 (via SP-RING-type domain); in the TGF-beta signaling pathway increases the activity of the SMAD3/SMAD4 transcriptional complex (By similarity). Interacts (when phosphorylated) with RNF111; RNF111 acts as an enhancer of the transcriptional responses by mediating ubiquitination and degradation of SMAD3 inhibitors (PubMed:17341133). Interacts (dephosphorylated form via the MH1 and MH2 domains) with RANBP3 (via its C-terminal R domain); the interaction results in the export of dephosphorylated SMAD3 out of the nucleus and termination of the TGF-beta signaling (By similarity). Interacts (via MH2 domain) with LEMD3; the interaction represses SMAD3 transcriptional activity through preventing the formation of the heteromeric complex with SMAD4 and translocation to the nucleus (By similarity). Interacts (via the linker region) with EP300 (C-terminal); the interaction promotes SMAD3 acetylation and is enhanced by TGF-beta phosphorylation in the C-terminal of SMAD3 (By similarity). This interaction can be blocked by competitive binding of adenovirus oncoprotein E1A to the same C-terminal site on EP300, which then results in partially inhibited SMAD3/SMAD4 transcriptional activity (By similarity). Interacts with TGFBR1 (By similarity). Interacts with TGFB1I1 (PubMed:14755691). Interacts with PRDM16 (PubMed:17467076). Interacts with SNW1 (By similarity). Interacts (via MH2 domain) with ZFYVE9 (PubMed:15356634). Interacts with HDAC1 (By similarity). Interacts with TGIF2 (By similarity). Interacts with SKOR1 (By similarity). Interacts with SKOR2 (By similarity). Interacts with DACH1; the interaction inhibits the TGF-beta signaling (By similarity). Interacts with RBPMS (By similarity). Interacts (via MH2 domain) with MECOM (By similarity). Interacts with WWTR1 (via its coiled-coil domain) (By similarity). Interacts with SKI; the interaction represses SMAD3 transcriptional activity (By similarity). Interacts with MEN1 (By similarity). Interacts with IL1F7 (By similarity). Interaction with CSNK1G2 (By similarity). Interacts with PDPK1 (via PH domain) (By similarity). Interacts with DAB2; the interactions are enhanced upon TGF-beta stimulation (By similarity). Interacts with USP15 (By similarity). Interacts with PPP5C; the interaction decreases SMAD3 phosphorylation and protein levels (PubMed:22781750). Interacts with LDLRAD4 (via the SMAD interaction motif) (By similarity). Interacts with PMEPA1 (By similarity). Interacts with ZNF451 (By similarity). Interacts with ZFHX3 (By similarity). Interacts weakly with ZNF8 (PubMed:12370310). Interacts with STUB1, HSPA1A, HSPA1B, HSP90AA1 and HSP90AB1 (By similarity). Interacts with YAP1 (when phosphorylated at 'Ser-112') (PubMed:21145499). Interacts with MAGI2/ARIP1 (PubMed:10681527). Interacts (via MH2 domain) with CITED2 (via C-terminus) (By similarity). Interacts with HGS (PubMed:11094085). Interacts with WWP1 (PubMed:15221015). Interacts with TTRAP (PubMed:18039968). Interacts with FOXL2 (PubMed:19106105). Interacts with PML (PubMed:15356634). Interacts with NEDD4L; the interaction requires TGF-beta stimulation (PubMed:15496141). Interacts with ZC3H3 (PubMed:16115198). Interacts with TGIF. Interacts with CREBBP. Interacts with ATF2. Interacts with NEDD9; the interaction is inhibited by oxidation of NEDD9 (By similarity). Interacts with MTMR4; negatively regulates TGF-beta signaling through SMAD3 dephosphorylation and retention in endosomes (By similarity).</text>
</comment>
<comment type="interaction">
    <interactant intactId="EBI-2337983">
        <id>Q8BUN5</id>
    </interactant>
    <interactant intactId="EBI-2365912">
        <id>O35625</id>
        <label>Axin1</label>
    </interactant>
    <organismsDiffer>false</organismsDiffer>
    <experiments>2</experiments>
</comment>
<comment type="interaction">
    <interactant intactId="EBI-2337983">
        <id>Q8BUN5</id>
    </interactant>
    <interactant intactId="EBI-1606219">
        <id>P20263</id>
        <label>Pou5f1</label>
    </interactant>
    <organismsDiffer>false</organismsDiffer>
    <experiments>13</experiments>
</comment>
<comment type="interaction">
    <interactant intactId="EBI-2337983">
        <id>Q8BUN5</id>
    </interactant>
    <interactant intactId="EBI-5259270">
        <id>P97471</id>
        <label>Smad4</label>
    </interactant>
    <organismsDiffer>false</organismsDiffer>
    <experiments>6</experiments>
</comment>
<comment type="subcellular location">
    <subcellularLocation>
        <location evidence="16 24 25">Cytoplasm</location>
    </subcellularLocation>
    <subcellularLocation>
        <location evidence="16 24 25">Nucleus</location>
    </subcellularLocation>
    <text evidence="2 24">Cytoplasmic and nuclear in the absence of TGF-beta (PubMed:21145499). On TGF-beta stimulation, migrates to the nucleus when complexed with SMAD4 (PubMed:21145499). Through the action of the phosphatase PPM1A, released from the SMAD2/SMAD4 complex, and exported out of the nucleus by interaction with RANBP1 (By similarity). Co-localizes with LEMD3 at the nucleus inner membrane (By similarity). MAPK-mediated phosphorylation appears to have no effect on nuclear import. PDPK1 prevents its nuclear translocation in response to TGF-beta (By similarity). Localized mainly to the nucleus in the early stages of embryo development with expression becoming evident in the cytoplasm of the inner cell mass at the blastocyst stage (PubMed:21145499).</text>
</comment>
<comment type="tissue specificity">
    <text evidence="7">Highly expressed in the brain and ovary. Detected in the pyramidal cells of the hippocampus, granule cells of the dentate gyrus, granular cells of the cerebral cortex and the granulosa cells of the ovary.</text>
</comment>
<comment type="domain">
    <text evidence="1">The MH1 domain is required for DNA binding (By similarity). Also binds zinc ions which are necessary for the DNA binding.</text>
</comment>
<comment type="domain">
    <text evidence="1">The MH2 domain is required for both homomeric and heteromeric interactions and for transcriptional regulation. Sufficient for nuclear import (By similarity).</text>
</comment>
<comment type="domain">
    <text evidence="1">The linker region is required for the TGFbeta-mediated transcriptional activity and acts synergistically with the MH2 domain.</text>
</comment>
<comment type="PTM">
    <text evidence="2">Phosphorylated on serine and threonine residues. Enhanced phosphorylation in the linker region on Thr-179, Ser-204 and Ser-208 on EGF and TGF-beta treatment. Ser-208 is the main site of MAPK-mediated phosphorylation. CDK-mediated phosphorylation occurs in a cell-cycle dependent manner and inhibits both the transcriptional activity and antiproliferative functions of SMAD3. This phosphorylation is inhibited by flavopiridol. Maximum phosphorylation at the G(1)/S junction. Also phosphorylated on serine residues in the C-terminal SXS motif by TGFBR1 and ACVR1. TGFBR1-mediated phosphorylation at these C-terminal sites is required for interaction with SMAD4, nuclear location and transactivational activity, and appears to be a prerequisite for the TGF-beta mediated phosphorylation in the linker region. Dephosphorylated in the C-terminal SXS motif by PPM1A. This dephosphorylation disrupts the interaction with SMAD4, promotes nuclear export and terminates TGF-beta-mediated signaling. Phosphorylation at Ser-418 by CSNK1G2/CK1 promotes ligand-dependent ubiquitination and subsequent proteasome degradation, thus inhibiting SMAD3-mediated TGF-beta responses (By similarity). Phosphorylated by PDPK1 (By similarity).</text>
</comment>
<comment type="PTM">
    <text evidence="2">Acetylation in the nucleus by EP300 in the MH2 domain regulates positively its transcriptional activity and is enhanced by TGF-beta.</text>
</comment>
<comment type="PTM">
    <text evidence="2 19">Ubiquitinated. Monoubiquitinated, leading to prevent DNA-binding. Deubiquitination by USP15 alleviates inhibition and promotes activation of TGF-beta target genes (By similarity). Ubiquitinated by RNF111, leading to its degradation: only SMAD3 proteins that are 'in use' are targeted by RNF111, RNF111 playing a key role in activating SMAD3 and regulating its turnover (PubMed:17341133). Undergoes STUB1-mediated ubiquitination and degradation (By similarity).</text>
</comment>
<comment type="PTM">
    <text evidence="2">Poly-ADP-ribosylated by PARP1 and PARP2. ADP-ribosylation negatively regulates SMAD3 transcriptional responses during the course of TGF-beta signaling.</text>
</comment>
<comment type="disruption phenotype">
    <text evidence="8 11 13 23">SMAD3 null mice exhibit inhibition of proliferation of mammary gland epithelial cells. Fibrobasts are only partially growth inhibited. Defects in osteoblast differentiation are observed. Animals are osteopenic with less cortical and cancellous bone. Facture healing is accelerated. Decreased bone mineral density (BMD) reflects the inability of osteoblasts to balance osteoclast activity. Wound healing is accelerated to about two and a half times that of normal animals. Wound areas are significantly reduced with less quantities of granulation tissue. There is reduced local infiltration of moncytes and keratinocytes show altered patterns of growth and migration. Accelerated wound healing is observed on castration of null male mice, while null female mice exhibited delayed healing following ovariectomy.</text>
</comment>
<comment type="similarity">
    <text evidence="27">Belongs to the dwarfin/SMAD family.</text>
</comment>
<gene>
    <name type="primary">Smad3</name>
    <name type="synonym">Madh3</name>
</gene>
<proteinExistence type="evidence at protein level"/>